<name>HRCA_BRUSI</name>
<proteinExistence type="inferred from homology"/>
<evidence type="ECO:0000255" key="1">
    <source>
        <dbReference type="HAMAP-Rule" id="MF_00081"/>
    </source>
</evidence>
<comment type="function">
    <text evidence="1">Negative regulator of class I heat shock genes (grpE-dnaK-dnaJ and groELS operons). Prevents heat-shock induction of these operons.</text>
</comment>
<comment type="similarity">
    <text evidence="1">Belongs to the HrcA family.</text>
</comment>
<organism>
    <name type="scientific">Brucella suis (strain ATCC 23445 / NCTC 10510)</name>
    <dbReference type="NCBI Taxonomy" id="470137"/>
    <lineage>
        <taxon>Bacteria</taxon>
        <taxon>Pseudomonadati</taxon>
        <taxon>Pseudomonadota</taxon>
        <taxon>Alphaproteobacteria</taxon>
        <taxon>Hyphomicrobiales</taxon>
        <taxon>Brucellaceae</taxon>
        <taxon>Brucella/Ochrobactrum group</taxon>
        <taxon>Brucella</taxon>
    </lineage>
</organism>
<reference key="1">
    <citation type="submission" date="2007-12" db="EMBL/GenBank/DDBJ databases">
        <title>Brucella suis ATCC 23445 whole genome shotgun sequencing project.</title>
        <authorList>
            <person name="Setubal J.C."/>
            <person name="Bowns C."/>
            <person name="Boyle S."/>
            <person name="Crasta O.R."/>
            <person name="Czar M.J."/>
            <person name="Dharmanolla C."/>
            <person name="Gillespie J.J."/>
            <person name="Kenyon R.W."/>
            <person name="Lu J."/>
            <person name="Mane S."/>
            <person name="Mohapatra S."/>
            <person name="Nagrani S."/>
            <person name="Purkayastha A."/>
            <person name="Rajasimha H.K."/>
            <person name="Shallom J.M."/>
            <person name="Shallom S."/>
            <person name="Shukla M."/>
            <person name="Snyder E.E."/>
            <person name="Sobral B.W."/>
            <person name="Wattam A.R."/>
            <person name="Will R."/>
            <person name="Williams K."/>
            <person name="Yoo H."/>
            <person name="Bruce D."/>
            <person name="Detter C."/>
            <person name="Munk C."/>
            <person name="Brettin T.S."/>
        </authorList>
    </citation>
    <scope>NUCLEOTIDE SEQUENCE [LARGE SCALE GENOMIC DNA]</scope>
    <source>
        <strain>ATCC 23445 / NCTC 10510</strain>
    </source>
</reference>
<sequence length="356" mass="39094">MMRPPEHQLLSSLDQRSRDIFRLIVETYLNDGDPVGSRNLSRLLPHTLSPATIRNVMSDLEHLGLIYAPHISAGRLPTQIGLRFFVDAFLEVGDLPPEERSSIEAQVRAAGTSNSVESVLTEASQVLSGLSRGAGLVLTNKTDVALKHIEFVRLEPMRALAVLVMQNGDVENRVIDLPAGISTSQLIEASNFLNAHIHGHTLSEAKSELRKLSEETRRELDQLSQELVAKGLAVWSGAGADQPARLIVRGRANLLENVHAQEDIERLRHLFDDLETKDGMVQLLDLAEAGSGVRIFIGSENKLFSLSGSSLVVAPYRDSEQRVIGALGVIGPTRLNYARIVPMVDYTAQIVSRLLR</sequence>
<dbReference type="EMBL" id="CP000911">
    <property type="protein sequence ID" value="ABY37275.1"/>
    <property type="molecule type" value="Genomic_DNA"/>
</dbReference>
<dbReference type="RefSeq" id="WP_002965420.1">
    <property type="nucleotide sequence ID" value="NC_010169.1"/>
</dbReference>
<dbReference type="SMR" id="B0CJ31"/>
<dbReference type="GeneID" id="93017361"/>
<dbReference type="KEGG" id="bmt:BSUIS_A0173"/>
<dbReference type="HOGENOM" id="CLU_050019_0_0_5"/>
<dbReference type="Proteomes" id="UP000008545">
    <property type="component" value="Chromosome I"/>
</dbReference>
<dbReference type="GO" id="GO:0003677">
    <property type="term" value="F:DNA binding"/>
    <property type="evidence" value="ECO:0007669"/>
    <property type="project" value="InterPro"/>
</dbReference>
<dbReference type="GO" id="GO:0045892">
    <property type="term" value="P:negative regulation of DNA-templated transcription"/>
    <property type="evidence" value="ECO:0007669"/>
    <property type="project" value="UniProtKB-UniRule"/>
</dbReference>
<dbReference type="Gene3D" id="3.30.450.40">
    <property type="match status" value="1"/>
</dbReference>
<dbReference type="Gene3D" id="3.30.390.60">
    <property type="entry name" value="Heat-inducible transcription repressor hrca homolog, domain 3"/>
    <property type="match status" value="1"/>
</dbReference>
<dbReference type="Gene3D" id="1.10.10.10">
    <property type="entry name" value="Winged helix-like DNA-binding domain superfamily/Winged helix DNA-binding domain"/>
    <property type="match status" value="1"/>
</dbReference>
<dbReference type="HAMAP" id="MF_00081">
    <property type="entry name" value="HrcA"/>
    <property type="match status" value="1"/>
</dbReference>
<dbReference type="InterPro" id="IPR029016">
    <property type="entry name" value="GAF-like_dom_sf"/>
</dbReference>
<dbReference type="InterPro" id="IPR002571">
    <property type="entry name" value="HrcA"/>
</dbReference>
<dbReference type="InterPro" id="IPR021153">
    <property type="entry name" value="HrcA_C"/>
</dbReference>
<dbReference type="InterPro" id="IPR036388">
    <property type="entry name" value="WH-like_DNA-bd_sf"/>
</dbReference>
<dbReference type="InterPro" id="IPR036390">
    <property type="entry name" value="WH_DNA-bd_sf"/>
</dbReference>
<dbReference type="InterPro" id="IPR023120">
    <property type="entry name" value="WHTH_transcript_rep_HrcA_IDD"/>
</dbReference>
<dbReference type="NCBIfam" id="TIGR00331">
    <property type="entry name" value="hrcA"/>
    <property type="match status" value="1"/>
</dbReference>
<dbReference type="PANTHER" id="PTHR34824">
    <property type="entry name" value="HEAT-INDUCIBLE TRANSCRIPTION REPRESSOR HRCA"/>
    <property type="match status" value="1"/>
</dbReference>
<dbReference type="PANTHER" id="PTHR34824:SF1">
    <property type="entry name" value="HEAT-INDUCIBLE TRANSCRIPTION REPRESSOR HRCA"/>
    <property type="match status" value="1"/>
</dbReference>
<dbReference type="Pfam" id="PF01628">
    <property type="entry name" value="HrcA"/>
    <property type="match status" value="1"/>
</dbReference>
<dbReference type="PIRSF" id="PIRSF005485">
    <property type="entry name" value="HrcA"/>
    <property type="match status" value="1"/>
</dbReference>
<dbReference type="SUPFAM" id="SSF55781">
    <property type="entry name" value="GAF domain-like"/>
    <property type="match status" value="1"/>
</dbReference>
<dbReference type="SUPFAM" id="SSF46785">
    <property type="entry name" value="Winged helix' DNA-binding domain"/>
    <property type="match status" value="1"/>
</dbReference>
<keyword id="KW-0678">Repressor</keyword>
<keyword id="KW-0346">Stress response</keyword>
<keyword id="KW-0804">Transcription</keyword>
<keyword id="KW-0805">Transcription regulation</keyword>
<accession>B0CJ31</accession>
<feature type="chain" id="PRO_1000075282" description="Heat-inducible transcription repressor HrcA">
    <location>
        <begin position="1"/>
        <end position="356"/>
    </location>
</feature>
<gene>
    <name evidence="1" type="primary">hrcA</name>
    <name type="ordered locus">BSUIS_A0173</name>
</gene>
<protein>
    <recommendedName>
        <fullName evidence="1">Heat-inducible transcription repressor HrcA</fullName>
    </recommendedName>
</protein>